<sequence length="420" mass="47132">MVEKRTQPLARDAMAYVLAGGRGSRLKELTDRRAKPAVYFGGKARIIDFALSNALNSGIRRIGVATQYKAHSLIRHLQRGWNFFRPERNESFDILPASQRVSETQWYEGTADAVYQNIDIIEDHGVEYMVILAGDHVYKMDYELMLQQHVDSGADVTVGCLEVPRMEATGFGVMHVDNADRIIAFVEKPADPPGIPGNPDMALASMGIYVFHTKFLMDMLRRDAADPKSSRDFGKDIIPYIVEHGKAVAHRFTHSCVRSDFEREAYWRDVGTIDAYWQANIDLTHITPELDIYDSTWPIWTFSEIKPPAKFVHDDENRRGSATSSLVSGDCIISGAALNRSLLFTGVRVNSYSRLENAVVLPDVTIGRHSILRNVVIDSRVVIPEGLVVGDDPELDAKRFRRTESGVCLITQTMIDKLGM</sequence>
<name>GLGC_RHIME</name>
<accession>Q92M13</accession>
<evidence type="ECO:0000255" key="1">
    <source>
        <dbReference type="HAMAP-Rule" id="MF_00624"/>
    </source>
</evidence>
<comment type="function">
    <text evidence="1">Involved in the biosynthesis of ADP-glucose, a building block required for the elongation reactions to produce glycogen. Catalyzes the reaction between ATP and alpha-D-glucose 1-phosphate (G1P) to produce pyrophosphate and ADP-Glc.</text>
</comment>
<comment type="catalytic activity">
    <reaction evidence="1">
        <text>alpha-D-glucose 1-phosphate + ATP + H(+) = ADP-alpha-D-glucose + diphosphate</text>
        <dbReference type="Rhea" id="RHEA:12120"/>
        <dbReference type="ChEBI" id="CHEBI:15378"/>
        <dbReference type="ChEBI" id="CHEBI:30616"/>
        <dbReference type="ChEBI" id="CHEBI:33019"/>
        <dbReference type="ChEBI" id="CHEBI:57498"/>
        <dbReference type="ChEBI" id="CHEBI:58601"/>
        <dbReference type="EC" id="2.7.7.27"/>
    </reaction>
</comment>
<comment type="pathway">
    <text evidence="1">Glycan biosynthesis; glycogen biosynthesis.</text>
</comment>
<comment type="subunit">
    <text evidence="1">Homotetramer.</text>
</comment>
<comment type="similarity">
    <text evidence="1">Belongs to the bacterial/plant glucose-1-phosphate adenylyltransferase family.</text>
</comment>
<organism>
    <name type="scientific">Rhizobium meliloti (strain 1021)</name>
    <name type="common">Ensifer meliloti</name>
    <name type="synonym">Sinorhizobium meliloti</name>
    <dbReference type="NCBI Taxonomy" id="266834"/>
    <lineage>
        <taxon>Bacteria</taxon>
        <taxon>Pseudomonadati</taxon>
        <taxon>Pseudomonadota</taxon>
        <taxon>Alphaproteobacteria</taxon>
        <taxon>Hyphomicrobiales</taxon>
        <taxon>Rhizobiaceae</taxon>
        <taxon>Sinorhizobium/Ensifer group</taxon>
        <taxon>Sinorhizobium</taxon>
    </lineage>
</organism>
<gene>
    <name evidence="1" type="primary">glgC</name>
    <name type="ordered locus">R02845</name>
    <name type="ORF">SMc03923</name>
</gene>
<reference key="1">
    <citation type="journal article" date="2001" name="Proc. Natl. Acad. Sci. U.S.A.">
        <title>Analysis of the chromosome sequence of the legume symbiont Sinorhizobium meliloti strain 1021.</title>
        <authorList>
            <person name="Capela D."/>
            <person name="Barloy-Hubler F."/>
            <person name="Gouzy J."/>
            <person name="Bothe G."/>
            <person name="Ampe F."/>
            <person name="Batut J."/>
            <person name="Boistard P."/>
            <person name="Becker A."/>
            <person name="Boutry M."/>
            <person name="Cadieu E."/>
            <person name="Dreano S."/>
            <person name="Gloux S."/>
            <person name="Godrie T."/>
            <person name="Goffeau A."/>
            <person name="Kahn D."/>
            <person name="Kiss E."/>
            <person name="Lelaure V."/>
            <person name="Masuy D."/>
            <person name="Pohl T."/>
            <person name="Portetelle D."/>
            <person name="Puehler A."/>
            <person name="Purnelle B."/>
            <person name="Ramsperger U."/>
            <person name="Renard C."/>
            <person name="Thebault P."/>
            <person name="Vandenbol M."/>
            <person name="Weidner S."/>
            <person name="Galibert F."/>
        </authorList>
    </citation>
    <scope>NUCLEOTIDE SEQUENCE [LARGE SCALE GENOMIC DNA]</scope>
    <source>
        <strain>1021</strain>
    </source>
</reference>
<reference key="2">
    <citation type="journal article" date="2001" name="Science">
        <title>The composite genome of the legume symbiont Sinorhizobium meliloti.</title>
        <authorList>
            <person name="Galibert F."/>
            <person name="Finan T.M."/>
            <person name="Long S.R."/>
            <person name="Puehler A."/>
            <person name="Abola P."/>
            <person name="Ampe F."/>
            <person name="Barloy-Hubler F."/>
            <person name="Barnett M.J."/>
            <person name="Becker A."/>
            <person name="Boistard P."/>
            <person name="Bothe G."/>
            <person name="Boutry M."/>
            <person name="Bowser L."/>
            <person name="Buhrmester J."/>
            <person name="Cadieu E."/>
            <person name="Capela D."/>
            <person name="Chain P."/>
            <person name="Cowie A."/>
            <person name="Davis R.W."/>
            <person name="Dreano S."/>
            <person name="Federspiel N.A."/>
            <person name="Fisher R.F."/>
            <person name="Gloux S."/>
            <person name="Godrie T."/>
            <person name="Goffeau A."/>
            <person name="Golding B."/>
            <person name="Gouzy J."/>
            <person name="Gurjal M."/>
            <person name="Hernandez-Lucas I."/>
            <person name="Hong A."/>
            <person name="Huizar L."/>
            <person name="Hyman R.W."/>
            <person name="Jones T."/>
            <person name="Kahn D."/>
            <person name="Kahn M.L."/>
            <person name="Kalman S."/>
            <person name="Keating D.H."/>
            <person name="Kiss E."/>
            <person name="Komp C."/>
            <person name="Lelaure V."/>
            <person name="Masuy D."/>
            <person name="Palm C."/>
            <person name="Peck M.C."/>
            <person name="Pohl T.M."/>
            <person name="Portetelle D."/>
            <person name="Purnelle B."/>
            <person name="Ramsperger U."/>
            <person name="Surzycki R."/>
            <person name="Thebault P."/>
            <person name="Vandenbol M."/>
            <person name="Vorhoelter F.J."/>
            <person name="Weidner S."/>
            <person name="Wells D.H."/>
            <person name="Wong K."/>
            <person name="Yeh K.-C."/>
            <person name="Batut J."/>
        </authorList>
    </citation>
    <scope>NUCLEOTIDE SEQUENCE [LARGE SCALE GENOMIC DNA]</scope>
    <source>
        <strain>1021</strain>
    </source>
</reference>
<protein>
    <recommendedName>
        <fullName evidence="1">Glucose-1-phosphate adenylyltransferase</fullName>
        <ecNumber evidence="1">2.7.7.27</ecNumber>
    </recommendedName>
    <alternativeName>
        <fullName evidence="1">ADP-glucose pyrophosphorylase</fullName>
        <shortName evidence="1">ADPGlc PPase</shortName>
    </alternativeName>
    <alternativeName>
        <fullName evidence="1">ADP-glucose synthase</fullName>
    </alternativeName>
</protein>
<dbReference type="EC" id="2.7.7.27" evidence="1"/>
<dbReference type="EMBL" id="AL591688">
    <property type="protein sequence ID" value="CAC47424.1"/>
    <property type="molecule type" value="Genomic_DNA"/>
</dbReference>
<dbReference type="RefSeq" id="NP_386951.1">
    <property type="nucleotide sequence ID" value="NC_003047.1"/>
</dbReference>
<dbReference type="RefSeq" id="WP_003533906.1">
    <property type="nucleotide sequence ID" value="NC_003047.1"/>
</dbReference>
<dbReference type="SMR" id="Q92M13"/>
<dbReference type="EnsemblBacteria" id="CAC47424">
    <property type="protein sequence ID" value="CAC47424"/>
    <property type="gene ID" value="SMc03923"/>
</dbReference>
<dbReference type="GeneID" id="89577273"/>
<dbReference type="KEGG" id="sme:SMc03923"/>
<dbReference type="PATRIC" id="fig|266834.11.peg.4365"/>
<dbReference type="eggNOG" id="COG0448">
    <property type="taxonomic scope" value="Bacteria"/>
</dbReference>
<dbReference type="HOGENOM" id="CLU_029499_14_1_5"/>
<dbReference type="OrthoDB" id="9801810at2"/>
<dbReference type="UniPathway" id="UPA00164"/>
<dbReference type="Proteomes" id="UP000001976">
    <property type="component" value="Chromosome"/>
</dbReference>
<dbReference type="GO" id="GO:0005524">
    <property type="term" value="F:ATP binding"/>
    <property type="evidence" value="ECO:0007669"/>
    <property type="project" value="UniProtKB-KW"/>
</dbReference>
<dbReference type="GO" id="GO:0008878">
    <property type="term" value="F:glucose-1-phosphate adenylyltransferase activity"/>
    <property type="evidence" value="ECO:0007669"/>
    <property type="project" value="UniProtKB-UniRule"/>
</dbReference>
<dbReference type="GO" id="GO:0005978">
    <property type="term" value="P:glycogen biosynthetic process"/>
    <property type="evidence" value="ECO:0007669"/>
    <property type="project" value="UniProtKB-UniRule"/>
</dbReference>
<dbReference type="CDD" id="cd02508">
    <property type="entry name" value="ADP_Glucose_PP"/>
    <property type="match status" value="1"/>
</dbReference>
<dbReference type="CDD" id="cd04651">
    <property type="entry name" value="LbH_G1P_AT_C"/>
    <property type="match status" value="1"/>
</dbReference>
<dbReference type="Gene3D" id="2.160.10.10">
    <property type="entry name" value="Hexapeptide repeat proteins"/>
    <property type="match status" value="1"/>
</dbReference>
<dbReference type="Gene3D" id="3.90.550.10">
    <property type="entry name" value="Spore Coat Polysaccharide Biosynthesis Protein SpsA, Chain A"/>
    <property type="match status" value="1"/>
</dbReference>
<dbReference type="HAMAP" id="MF_00624">
    <property type="entry name" value="GlgC"/>
    <property type="match status" value="1"/>
</dbReference>
<dbReference type="InterPro" id="IPR011831">
    <property type="entry name" value="ADP-Glc_PPase"/>
</dbReference>
<dbReference type="InterPro" id="IPR005836">
    <property type="entry name" value="ADP_Glu_pyroP_CS"/>
</dbReference>
<dbReference type="InterPro" id="IPR023049">
    <property type="entry name" value="GlgC_bac"/>
</dbReference>
<dbReference type="InterPro" id="IPR056818">
    <property type="entry name" value="GlmU/GlgC-like_hexapep"/>
</dbReference>
<dbReference type="InterPro" id="IPR005835">
    <property type="entry name" value="NTP_transferase_dom"/>
</dbReference>
<dbReference type="InterPro" id="IPR029044">
    <property type="entry name" value="Nucleotide-diphossugar_trans"/>
</dbReference>
<dbReference type="InterPro" id="IPR011004">
    <property type="entry name" value="Trimer_LpxA-like_sf"/>
</dbReference>
<dbReference type="NCBIfam" id="TIGR02091">
    <property type="entry name" value="glgC"/>
    <property type="match status" value="1"/>
</dbReference>
<dbReference type="NCBIfam" id="NF001947">
    <property type="entry name" value="PRK00725.1"/>
    <property type="match status" value="1"/>
</dbReference>
<dbReference type="NCBIfam" id="NF002023">
    <property type="entry name" value="PRK00844.1"/>
    <property type="match status" value="1"/>
</dbReference>
<dbReference type="PANTHER" id="PTHR43523:SF2">
    <property type="entry name" value="GLUCOSE-1-PHOSPHATE ADENYLYLTRANSFERASE"/>
    <property type="match status" value="1"/>
</dbReference>
<dbReference type="PANTHER" id="PTHR43523">
    <property type="entry name" value="GLUCOSE-1-PHOSPHATE ADENYLYLTRANSFERASE-RELATED"/>
    <property type="match status" value="1"/>
</dbReference>
<dbReference type="Pfam" id="PF24894">
    <property type="entry name" value="Hexapep_GlmU"/>
    <property type="match status" value="1"/>
</dbReference>
<dbReference type="Pfam" id="PF00483">
    <property type="entry name" value="NTP_transferase"/>
    <property type="match status" value="1"/>
</dbReference>
<dbReference type="SUPFAM" id="SSF53448">
    <property type="entry name" value="Nucleotide-diphospho-sugar transferases"/>
    <property type="match status" value="1"/>
</dbReference>
<dbReference type="SUPFAM" id="SSF51161">
    <property type="entry name" value="Trimeric LpxA-like enzymes"/>
    <property type="match status" value="1"/>
</dbReference>
<dbReference type="PROSITE" id="PS00808">
    <property type="entry name" value="ADP_GLC_PYROPHOSPH_1"/>
    <property type="match status" value="1"/>
</dbReference>
<dbReference type="PROSITE" id="PS00809">
    <property type="entry name" value="ADP_GLC_PYROPHOSPH_2"/>
    <property type="match status" value="1"/>
</dbReference>
<dbReference type="PROSITE" id="PS00810">
    <property type="entry name" value="ADP_GLC_PYROPHOSPH_3"/>
    <property type="match status" value="1"/>
</dbReference>
<keyword id="KW-0067">ATP-binding</keyword>
<keyword id="KW-0119">Carbohydrate metabolism</keyword>
<keyword id="KW-0320">Glycogen biosynthesis</keyword>
<keyword id="KW-0321">Glycogen metabolism</keyword>
<keyword id="KW-0547">Nucleotide-binding</keyword>
<keyword id="KW-0548">Nucleotidyltransferase</keyword>
<keyword id="KW-1185">Reference proteome</keyword>
<keyword id="KW-0808">Transferase</keyword>
<feature type="chain" id="PRO_0000195318" description="Glucose-1-phosphate adenylyltransferase">
    <location>
        <begin position="1"/>
        <end position="420"/>
    </location>
</feature>
<feature type="binding site" evidence="1">
    <location>
        <position position="107"/>
    </location>
    <ligand>
        <name>alpha-D-glucose 1-phosphate</name>
        <dbReference type="ChEBI" id="CHEBI:58601"/>
    </ligand>
</feature>
<feature type="binding site" evidence="1">
    <location>
        <position position="172"/>
    </location>
    <ligand>
        <name>alpha-D-glucose 1-phosphate</name>
        <dbReference type="ChEBI" id="CHEBI:58601"/>
    </ligand>
</feature>
<feature type="binding site" evidence="1">
    <location>
        <begin position="187"/>
        <end position="188"/>
    </location>
    <ligand>
        <name>alpha-D-glucose 1-phosphate</name>
        <dbReference type="ChEBI" id="CHEBI:58601"/>
    </ligand>
</feature>
<feature type="binding site" evidence="1">
    <location>
        <position position="205"/>
    </location>
    <ligand>
        <name>alpha-D-glucose 1-phosphate</name>
        <dbReference type="ChEBI" id="CHEBI:58601"/>
    </ligand>
</feature>
<proteinExistence type="inferred from homology"/>